<organism>
    <name type="scientific">Escherichia coli</name>
    <dbReference type="NCBI Taxonomy" id="562"/>
    <lineage>
        <taxon>Bacteria</taxon>
        <taxon>Pseudomonadati</taxon>
        <taxon>Pseudomonadota</taxon>
        <taxon>Gammaproteobacteria</taxon>
        <taxon>Enterobacterales</taxon>
        <taxon>Enterobacteriaceae</taxon>
        <taxon>Escherichia</taxon>
    </lineage>
</organism>
<feature type="signal peptide" evidence="1">
    <location>
        <begin position="1"/>
        <end position="21"/>
    </location>
</feature>
<feature type="chain" id="PRO_0000009310" description="Outer membrane usher protein FasD">
    <location>
        <begin position="22"/>
        <end position="835"/>
    </location>
</feature>
<feature type="disulfide bond" evidence="1">
    <location>
        <begin position="810"/>
        <end position="834"/>
    </location>
</feature>
<gene>
    <name type="primary">fasD</name>
</gene>
<protein>
    <recommendedName>
        <fullName>Outer membrane usher protein FasD</fullName>
    </recommendedName>
</protein>
<proteinExistence type="inferred from homology"/>
<evidence type="ECO:0000255" key="1"/>
<evidence type="ECO:0000305" key="2"/>
<reference key="1">
    <citation type="journal article" date="1994" name="J. Bacteriol.">
        <title>Permissive linker insertion sites in the outer membrane protein of 987P fimbriae of Escherichia coli.</title>
        <authorList>
            <person name="Schifferli D.M."/>
            <person name="Alrutz M.A."/>
        </authorList>
    </citation>
    <scope>NUCLEOTIDE SEQUENCE [GENOMIC DNA]</scope>
    <source>
        <strain>987 / ETEC</strain>
    </source>
</reference>
<sequence length="835" mass="92354">MNKYPPLLTMLIIGIGSNAVAGDYFDPSLLATDIGNNDKLDLSLFSHPGGGVKGEREVSVYINDFFYKNVTLDFENGISGALEPIFPSGFFDNILASPYRSIKEKELISTADFLSLVPYGMVRFDQAIARVDISIPQAYLGRDAQMKSAPESWNQGVPALLIDYRLSGSKNKYNYGSSQNFYANAFLGFNLMGWRLRTTTNYMSYNSKDLYNKGERQGSFNFYNTYLEKDIGYLRSTLRLGELSTRGMILESFNFKGGKIYSNDEMLNDRLRSYTPTVRGIASSQAVVTIKQGGVVILQKNVPPGPFEINDFSLSGYSGDLYVNIKEADGSEHSFIQPFSTLPEMKREGVSGYEISLGHYNNSGATQYYNESPFLYASWSRGYRNGMTLYSETIQSRKYQLLGVGSTLSLGDFGAVSGDASLSRANKYDKIHSGQSYGLKYSKNKVDTGTTVTLATYRYSTKDFYSFNDFVSKNDSVQYVWDNRLKNRITLSLNQSLDDYGSLSLIASQQNYWTSDYVSRSFSLSHSFGWNDIFFSTSFSLDQKEGDNALRNNNKVFGFYSSIPLSKLIGKNESTYSTLSYNVTKINNQVRNTATLAGKVPGSMAQYRFSSGWANTEQSSNKALSVNWDGDLLDGSLGYTSSGKNRITDYSLSGSAILYPWRLAIGSDSVINGAAVVETEFISGIKVRQGGETSLLGTAIVTSMQPYTENRIDLDTQNIPDDLFISNASKKIVPEKGAVVPVKYNLFKGKQIVFSLKRYDGTPLPFGSVVSLVGSDSEITGIIDDAGRVYLAGIPSKGILHGAWGYNKSCEVSFNLNGKPSNNSNEIIEYEGVCK</sequence>
<comment type="function">
    <text>Involved in the export and assembly of the 987P fimbriae subunits across the outer membrane.</text>
</comment>
<comment type="subcellular location">
    <subcellularLocation>
        <location>Cell outer membrane</location>
        <topology>Multi-pass membrane protein</topology>
    </subcellularLocation>
</comment>
<comment type="similarity">
    <text evidence="2">Belongs to the fimbrial export usher family.</text>
</comment>
<name>FASD_ECOLX</name>
<dbReference type="EMBL" id="L22659">
    <property type="protein sequence ID" value="AAA21827.1"/>
    <property type="molecule type" value="Genomic_DNA"/>
</dbReference>
<dbReference type="EMBL" id="U50547">
    <property type="protein sequence ID" value="AAB02687.1"/>
    <property type="molecule type" value="Genomic_DNA"/>
</dbReference>
<dbReference type="PIR" id="A49891">
    <property type="entry name" value="A49891"/>
</dbReference>
<dbReference type="RefSeq" id="WP_063079412.1">
    <property type="nucleotide sequence ID" value="NZ_UCZI01000041.1"/>
</dbReference>
<dbReference type="SMR" id="P46000"/>
<dbReference type="TCDB" id="1.B.11.3.10">
    <property type="family name" value="the outer membrane fimbrial usher porin (fup) family"/>
</dbReference>
<dbReference type="GO" id="GO:0009279">
    <property type="term" value="C:cell outer membrane"/>
    <property type="evidence" value="ECO:0007669"/>
    <property type="project" value="UniProtKB-SubCell"/>
</dbReference>
<dbReference type="GO" id="GO:0015473">
    <property type="term" value="F:fimbrial usher porin activity"/>
    <property type="evidence" value="ECO:0007669"/>
    <property type="project" value="InterPro"/>
</dbReference>
<dbReference type="GO" id="GO:0009297">
    <property type="term" value="P:pilus assembly"/>
    <property type="evidence" value="ECO:0007669"/>
    <property type="project" value="InterPro"/>
</dbReference>
<dbReference type="Gene3D" id="2.60.40.2070">
    <property type="match status" value="1"/>
</dbReference>
<dbReference type="Gene3D" id="2.60.40.3110">
    <property type="match status" value="1"/>
</dbReference>
<dbReference type="Gene3D" id="3.10.20.410">
    <property type="match status" value="1"/>
</dbReference>
<dbReference type="Gene3D" id="2.60.40.2610">
    <property type="entry name" value="Outer membrane usher protein FimD, plug domain"/>
    <property type="match status" value="1"/>
</dbReference>
<dbReference type="InterPro" id="IPR000015">
    <property type="entry name" value="Fimb_usher"/>
</dbReference>
<dbReference type="InterPro" id="IPR018030">
    <property type="entry name" value="Fimbrial_membr_usher_CS"/>
</dbReference>
<dbReference type="InterPro" id="IPR042186">
    <property type="entry name" value="FimD_plug_dom"/>
</dbReference>
<dbReference type="InterPro" id="IPR025949">
    <property type="entry name" value="PapC-like_C"/>
</dbReference>
<dbReference type="InterPro" id="IPR043142">
    <property type="entry name" value="PapC-like_C_sf"/>
</dbReference>
<dbReference type="InterPro" id="IPR025885">
    <property type="entry name" value="PapC_N"/>
</dbReference>
<dbReference type="InterPro" id="IPR037224">
    <property type="entry name" value="PapC_N_sf"/>
</dbReference>
<dbReference type="PANTHER" id="PTHR30451:SF21">
    <property type="entry name" value="FIMBRIAL USHER DOMAIN-CONTAINING PROTEIN YDET-RELATED"/>
    <property type="match status" value="1"/>
</dbReference>
<dbReference type="PANTHER" id="PTHR30451">
    <property type="entry name" value="OUTER MEMBRANE USHER PROTEIN"/>
    <property type="match status" value="1"/>
</dbReference>
<dbReference type="Pfam" id="PF13953">
    <property type="entry name" value="PapC_C"/>
    <property type="match status" value="1"/>
</dbReference>
<dbReference type="Pfam" id="PF13954">
    <property type="entry name" value="PapC_N"/>
    <property type="match status" value="1"/>
</dbReference>
<dbReference type="Pfam" id="PF00577">
    <property type="entry name" value="Usher"/>
    <property type="match status" value="1"/>
</dbReference>
<dbReference type="SUPFAM" id="SSF141729">
    <property type="entry name" value="FimD N-terminal domain-like"/>
    <property type="match status" value="1"/>
</dbReference>
<dbReference type="PROSITE" id="PS01151">
    <property type="entry name" value="FIMBRIAL_USHER"/>
    <property type="match status" value="1"/>
</dbReference>
<keyword id="KW-0998">Cell outer membrane</keyword>
<keyword id="KW-1015">Disulfide bond</keyword>
<keyword id="KW-1029">Fimbrium biogenesis</keyword>
<keyword id="KW-0472">Membrane</keyword>
<keyword id="KW-0732">Signal</keyword>
<keyword id="KW-0812">Transmembrane</keyword>
<keyword id="KW-1134">Transmembrane beta strand</keyword>
<keyword id="KW-0813">Transport</keyword>
<accession>P46000</accession>